<name>PSAL_CYACA</name>
<accession>Q9TM17</accession>
<proteinExistence type="inferred from homology"/>
<dbReference type="EMBL" id="AF022186">
    <property type="protein sequence ID" value="AAF12996.1"/>
    <property type="molecule type" value="Genomic_DNA"/>
</dbReference>
<dbReference type="RefSeq" id="NP_045050.1">
    <property type="nucleotide sequence ID" value="NC_001840.1"/>
</dbReference>
<dbReference type="EMDB" id="EMD-37480"/>
<dbReference type="SMR" id="Q9TM17"/>
<dbReference type="GeneID" id="800303"/>
<dbReference type="GO" id="GO:0009535">
    <property type="term" value="C:chloroplast thylakoid membrane"/>
    <property type="evidence" value="ECO:0007669"/>
    <property type="project" value="UniProtKB-SubCell"/>
</dbReference>
<dbReference type="GO" id="GO:0009538">
    <property type="term" value="C:photosystem I reaction center"/>
    <property type="evidence" value="ECO:0007669"/>
    <property type="project" value="InterPro"/>
</dbReference>
<dbReference type="GO" id="GO:0015979">
    <property type="term" value="P:photosynthesis"/>
    <property type="evidence" value="ECO:0007669"/>
    <property type="project" value="UniProtKB-UniRule"/>
</dbReference>
<dbReference type="Gene3D" id="1.20.1240.10">
    <property type="entry name" value="Photosystem I PsaL, reaction centre subunit XI"/>
    <property type="match status" value="1"/>
</dbReference>
<dbReference type="HAMAP" id="MF_00447">
    <property type="entry name" value="PSI_PsaL"/>
    <property type="match status" value="1"/>
</dbReference>
<dbReference type="InterPro" id="IPR003757">
    <property type="entry name" value="PSI_PsaL"/>
</dbReference>
<dbReference type="InterPro" id="IPR036592">
    <property type="entry name" value="PSI_PsaL_sf"/>
</dbReference>
<dbReference type="InterPro" id="IPR022980">
    <property type="entry name" value="PSI_suXI"/>
</dbReference>
<dbReference type="PANTHER" id="PTHR34803">
    <property type="entry name" value="PHOTOSYSTEM I REACTION CENTER SUBUNIT XI, CHLOROPLASTIC"/>
    <property type="match status" value="1"/>
</dbReference>
<dbReference type="PANTHER" id="PTHR34803:SF2">
    <property type="entry name" value="PHOTOSYSTEM I REACTION CENTER SUBUNIT XI, CHLOROPLASTIC"/>
    <property type="match status" value="1"/>
</dbReference>
<dbReference type="Pfam" id="PF02605">
    <property type="entry name" value="PsaL"/>
    <property type="match status" value="1"/>
</dbReference>
<dbReference type="SUPFAM" id="SSF81568">
    <property type="entry name" value="Photosystem I reaction center subunit XI, PsaL"/>
    <property type="match status" value="1"/>
</dbReference>
<reference key="1">
    <citation type="journal article" date="2000" name="J. Mol. Evol.">
        <title>The structure and gene repertoire of an ancient red algal plastid genome.</title>
        <authorList>
            <person name="Gloeckner G."/>
            <person name="Rosenthal A."/>
            <person name="Valentin K.-U."/>
        </authorList>
    </citation>
    <scope>NUCLEOTIDE SEQUENCE [LARGE SCALE GENOMIC DNA]</scope>
    <source>
        <strain>RK-1</strain>
    </source>
</reference>
<sequence>MINYIKPYGSNPFVGNLSTPVNSSKVTIWYLKNLPIYRRGLSPLLRGLEIGMAHGYFIIGPFYKLGPLRNTDLSLLSGLIAAIGLIIISSIAMIIYGIVTFDNSENNDKLQTANGWRQLASGFLLGAVGGAGFAYILLANNLLSTSTPILQT</sequence>
<keyword id="KW-0150">Chloroplast</keyword>
<keyword id="KW-0472">Membrane</keyword>
<keyword id="KW-0602">Photosynthesis</keyword>
<keyword id="KW-0603">Photosystem I</keyword>
<keyword id="KW-0934">Plastid</keyword>
<keyword id="KW-0793">Thylakoid</keyword>
<keyword id="KW-0812">Transmembrane</keyword>
<keyword id="KW-1133">Transmembrane helix</keyword>
<organism>
    <name type="scientific">Cyanidium caldarium</name>
    <name type="common">Red alga</name>
    <dbReference type="NCBI Taxonomy" id="2771"/>
    <lineage>
        <taxon>Eukaryota</taxon>
        <taxon>Rhodophyta</taxon>
        <taxon>Bangiophyceae</taxon>
        <taxon>Cyanidiales</taxon>
        <taxon>Cyanidiaceae</taxon>
        <taxon>Cyanidium</taxon>
    </lineage>
</organism>
<geneLocation type="chloroplast"/>
<evidence type="ECO:0000250" key="1"/>
<evidence type="ECO:0000255" key="2"/>
<evidence type="ECO:0000305" key="3"/>
<gene>
    <name type="primary">psaL</name>
</gene>
<feature type="chain" id="PRO_0000194686" description="Photosystem I reaction center subunit XI">
    <location>
        <begin position="1"/>
        <end position="152"/>
    </location>
</feature>
<feature type="topological domain" description="Stromal" evidence="2">
    <location>
        <begin position="1"/>
        <end position="72"/>
    </location>
</feature>
<feature type="transmembrane region" description="Helical" evidence="2">
    <location>
        <begin position="73"/>
        <end position="93"/>
    </location>
</feature>
<feature type="topological domain" description="Lumenal" evidence="2">
    <location>
        <begin position="94"/>
        <end position="123"/>
    </location>
</feature>
<feature type="transmembrane region" description="Helical" evidence="2">
    <location>
        <begin position="124"/>
        <end position="144"/>
    </location>
</feature>
<feature type="topological domain" description="Stromal" evidence="2">
    <location>
        <begin position="145"/>
        <end position="152"/>
    </location>
</feature>
<comment type="subcellular location">
    <subcellularLocation>
        <location evidence="1">Plastid</location>
        <location evidence="1">Chloroplast thylakoid membrane</location>
        <topology evidence="1">Multi-pass membrane protein</topology>
    </subcellularLocation>
</comment>
<comment type="similarity">
    <text evidence="3">Belongs to the PsaL family.</text>
</comment>
<protein>
    <recommendedName>
        <fullName>Photosystem I reaction center subunit XI</fullName>
    </recommendedName>
    <alternativeName>
        <fullName>PSI subunit V</fullName>
    </alternativeName>
    <alternativeName>
        <fullName>PSI-L</fullName>
    </alternativeName>
</protein>